<organism>
    <name type="scientific">Escherichia coli O157:H7 (strain EC4115 / EHEC)</name>
    <dbReference type="NCBI Taxonomy" id="444450"/>
    <lineage>
        <taxon>Bacteria</taxon>
        <taxon>Pseudomonadati</taxon>
        <taxon>Pseudomonadota</taxon>
        <taxon>Gammaproteobacteria</taxon>
        <taxon>Enterobacterales</taxon>
        <taxon>Enterobacteriaceae</taxon>
        <taxon>Escherichia</taxon>
    </lineage>
</organism>
<keyword id="KW-0067">ATP-binding</keyword>
<keyword id="KW-0378">Hydrolase</keyword>
<keyword id="KW-0547">Nucleotide-binding</keyword>
<feature type="chain" id="PRO_1000132050" description="5-oxoprolinase subunit A">
    <location>
        <begin position="1"/>
        <end position="244"/>
    </location>
</feature>
<dbReference type="EC" id="3.5.2.9" evidence="1"/>
<dbReference type="EMBL" id="CP001164">
    <property type="protein sequence ID" value="ACI35237.1"/>
    <property type="molecule type" value="Genomic_DNA"/>
</dbReference>
<dbReference type="RefSeq" id="WP_000687164.1">
    <property type="nucleotide sequence ID" value="NC_011353.1"/>
</dbReference>
<dbReference type="SMR" id="B5YQQ2"/>
<dbReference type="KEGG" id="ecf:ECH74115_0803"/>
<dbReference type="HOGENOM" id="CLU_069535_0_0_6"/>
<dbReference type="GO" id="GO:0017168">
    <property type="term" value="F:5-oxoprolinase (ATP-hydrolyzing) activity"/>
    <property type="evidence" value="ECO:0007669"/>
    <property type="project" value="UniProtKB-UniRule"/>
</dbReference>
<dbReference type="GO" id="GO:0005524">
    <property type="term" value="F:ATP binding"/>
    <property type="evidence" value="ECO:0007669"/>
    <property type="project" value="UniProtKB-UniRule"/>
</dbReference>
<dbReference type="GO" id="GO:0005975">
    <property type="term" value="P:carbohydrate metabolic process"/>
    <property type="evidence" value="ECO:0007669"/>
    <property type="project" value="InterPro"/>
</dbReference>
<dbReference type="CDD" id="cd10800">
    <property type="entry name" value="LamB_YcsF_YbgL_like"/>
    <property type="match status" value="1"/>
</dbReference>
<dbReference type="Gene3D" id="3.20.20.370">
    <property type="entry name" value="Glycoside hydrolase/deacetylase"/>
    <property type="match status" value="1"/>
</dbReference>
<dbReference type="HAMAP" id="MF_00691">
    <property type="entry name" value="PxpA"/>
    <property type="match status" value="1"/>
</dbReference>
<dbReference type="InterPro" id="IPR011330">
    <property type="entry name" value="Glyco_hydro/deAcase_b/a-brl"/>
</dbReference>
<dbReference type="InterPro" id="IPR005501">
    <property type="entry name" value="LamB/YcsF/PxpA-like"/>
</dbReference>
<dbReference type="NCBIfam" id="NF003812">
    <property type="entry name" value="PRK05406.1-1"/>
    <property type="match status" value="1"/>
</dbReference>
<dbReference type="NCBIfam" id="NF003814">
    <property type="entry name" value="PRK05406.1-3"/>
    <property type="match status" value="1"/>
</dbReference>
<dbReference type="NCBIfam" id="NF003815">
    <property type="entry name" value="PRK05406.1-4"/>
    <property type="match status" value="1"/>
</dbReference>
<dbReference type="NCBIfam" id="NF003816">
    <property type="entry name" value="PRK05406.1-5"/>
    <property type="match status" value="1"/>
</dbReference>
<dbReference type="PANTHER" id="PTHR30292:SF0">
    <property type="entry name" value="5-OXOPROLINASE SUBUNIT A"/>
    <property type="match status" value="1"/>
</dbReference>
<dbReference type="PANTHER" id="PTHR30292">
    <property type="entry name" value="UNCHARACTERIZED PROTEIN YBGL-RELATED"/>
    <property type="match status" value="1"/>
</dbReference>
<dbReference type="Pfam" id="PF03746">
    <property type="entry name" value="LamB_YcsF"/>
    <property type="match status" value="1"/>
</dbReference>
<dbReference type="SUPFAM" id="SSF88713">
    <property type="entry name" value="Glycoside hydrolase/deacetylase"/>
    <property type="match status" value="1"/>
</dbReference>
<name>PXPA_ECO5E</name>
<evidence type="ECO:0000255" key="1">
    <source>
        <dbReference type="HAMAP-Rule" id="MF_00691"/>
    </source>
</evidence>
<accession>B5YQQ2</accession>
<protein>
    <recommendedName>
        <fullName evidence="1">5-oxoprolinase subunit A</fullName>
        <shortName evidence="1">5-OPase subunit A</shortName>
        <ecNumber evidence="1">3.5.2.9</ecNumber>
    </recommendedName>
    <alternativeName>
        <fullName evidence="1">5-oxoprolinase (ATP-hydrolyzing) subunit A</fullName>
    </alternativeName>
</protein>
<reference key="1">
    <citation type="journal article" date="2011" name="Proc. Natl. Acad. Sci. U.S.A.">
        <title>Genomic anatomy of Escherichia coli O157:H7 outbreaks.</title>
        <authorList>
            <person name="Eppinger M."/>
            <person name="Mammel M.K."/>
            <person name="Leclerc J.E."/>
            <person name="Ravel J."/>
            <person name="Cebula T.A."/>
        </authorList>
    </citation>
    <scope>NUCLEOTIDE SEQUENCE [LARGE SCALE GENOMIC DNA]</scope>
    <source>
        <strain>EC4115 / EHEC</strain>
    </source>
</reference>
<comment type="function">
    <text evidence="1">Catalyzes the cleavage of 5-oxoproline to form L-glutamate coupled to the hydrolysis of ATP to ADP and inorganic phosphate.</text>
</comment>
<comment type="catalytic activity">
    <reaction evidence="1">
        <text>5-oxo-L-proline + ATP + 2 H2O = L-glutamate + ADP + phosphate + H(+)</text>
        <dbReference type="Rhea" id="RHEA:10348"/>
        <dbReference type="ChEBI" id="CHEBI:15377"/>
        <dbReference type="ChEBI" id="CHEBI:15378"/>
        <dbReference type="ChEBI" id="CHEBI:29985"/>
        <dbReference type="ChEBI" id="CHEBI:30616"/>
        <dbReference type="ChEBI" id="CHEBI:43474"/>
        <dbReference type="ChEBI" id="CHEBI:58402"/>
        <dbReference type="ChEBI" id="CHEBI:456216"/>
        <dbReference type="EC" id="3.5.2.9"/>
    </reaction>
</comment>
<comment type="subunit">
    <text evidence="1">Forms a complex composed of PxpA, PxpB and PxpC.</text>
</comment>
<comment type="similarity">
    <text evidence="1">Belongs to the LamB/PxpA family.</text>
</comment>
<proteinExistence type="inferred from homology"/>
<gene>
    <name evidence="1" type="primary">pxpA</name>
    <name type="ordered locus">ECH74115_0803</name>
</gene>
<sequence>MKIDLNADLGEGCTSDAELLTLVSSANIACGFHAGDAQTMQACVREAIKNGVAIGAHPSFPDRKNFGRSAMQLPPETVYAQTLYQIGALATITRAQGGVMRHVKPHGMLYNQAAKEAQLADAIARAVYACDPALVLVGLAGSELIRAGKQYGLTTREEVFADRGYQADGSLVPRSQSGALIEDEEQALAQTLEMVQHGRVKSITGEWATVTAQTVCLHGDGEHALAFARRLRSAFAEKGIVVAA</sequence>